<dbReference type="EC" id="2.3.1.234" evidence="1"/>
<dbReference type="EMBL" id="CP000655">
    <property type="protein sequence ID" value="ABP34915.1"/>
    <property type="molecule type" value="Genomic_DNA"/>
</dbReference>
<dbReference type="RefSeq" id="WP_011903538.1">
    <property type="nucleotide sequence ID" value="NC_009379.1"/>
</dbReference>
<dbReference type="SMR" id="A4SZK1"/>
<dbReference type="GeneID" id="31482091"/>
<dbReference type="KEGG" id="pnu:Pnuc_1702"/>
<dbReference type="eggNOG" id="COG0533">
    <property type="taxonomic scope" value="Bacteria"/>
</dbReference>
<dbReference type="HOGENOM" id="CLU_023208_0_0_4"/>
<dbReference type="Proteomes" id="UP000000231">
    <property type="component" value="Chromosome"/>
</dbReference>
<dbReference type="GO" id="GO:0005737">
    <property type="term" value="C:cytoplasm"/>
    <property type="evidence" value="ECO:0007669"/>
    <property type="project" value="UniProtKB-SubCell"/>
</dbReference>
<dbReference type="GO" id="GO:0005506">
    <property type="term" value="F:iron ion binding"/>
    <property type="evidence" value="ECO:0007669"/>
    <property type="project" value="UniProtKB-UniRule"/>
</dbReference>
<dbReference type="GO" id="GO:0061711">
    <property type="term" value="F:N(6)-L-threonylcarbamoyladenine synthase activity"/>
    <property type="evidence" value="ECO:0007669"/>
    <property type="project" value="UniProtKB-EC"/>
</dbReference>
<dbReference type="GO" id="GO:0002949">
    <property type="term" value="P:tRNA threonylcarbamoyladenosine modification"/>
    <property type="evidence" value="ECO:0007669"/>
    <property type="project" value="UniProtKB-UniRule"/>
</dbReference>
<dbReference type="CDD" id="cd24133">
    <property type="entry name" value="ASKHA_NBD_TsaD_bac"/>
    <property type="match status" value="1"/>
</dbReference>
<dbReference type="FunFam" id="3.30.420.40:FF:000012">
    <property type="entry name" value="tRNA N6-adenosine threonylcarbamoyltransferase"/>
    <property type="match status" value="1"/>
</dbReference>
<dbReference type="FunFam" id="3.30.420.40:FF:000040">
    <property type="entry name" value="tRNA N6-adenosine threonylcarbamoyltransferase"/>
    <property type="match status" value="1"/>
</dbReference>
<dbReference type="Gene3D" id="3.30.420.40">
    <property type="match status" value="2"/>
</dbReference>
<dbReference type="HAMAP" id="MF_01445">
    <property type="entry name" value="TsaD"/>
    <property type="match status" value="1"/>
</dbReference>
<dbReference type="InterPro" id="IPR043129">
    <property type="entry name" value="ATPase_NBD"/>
</dbReference>
<dbReference type="InterPro" id="IPR000905">
    <property type="entry name" value="Gcp-like_dom"/>
</dbReference>
<dbReference type="InterPro" id="IPR017861">
    <property type="entry name" value="KAE1/TsaD"/>
</dbReference>
<dbReference type="InterPro" id="IPR017860">
    <property type="entry name" value="Peptidase_M22_CS"/>
</dbReference>
<dbReference type="InterPro" id="IPR022450">
    <property type="entry name" value="TsaD"/>
</dbReference>
<dbReference type="NCBIfam" id="TIGR00329">
    <property type="entry name" value="gcp_kae1"/>
    <property type="match status" value="1"/>
</dbReference>
<dbReference type="NCBIfam" id="TIGR03723">
    <property type="entry name" value="T6A_TsaD_YgjD"/>
    <property type="match status" value="1"/>
</dbReference>
<dbReference type="PANTHER" id="PTHR11735">
    <property type="entry name" value="TRNA N6-ADENOSINE THREONYLCARBAMOYLTRANSFERASE"/>
    <property type="match status" value="1"/>
</dbReference>
<dbReference type="PANTHER" id="PTHR11735:SF6">
    <property type="entry name" value="TRNA N6-ADENOSINE THREONYLCARBAMOYLTRANSFERASE, MITOCHONDRIAL"/>
    <property type="match status" value="1"/>
</dbReference>
<dbReference type="Pfam" id="PF00814">
    <property type="entry name" value="TsaD"/>
    <property type="match status" value="1"/>
</dbReference>
<dbReference type="PRINTS" id="PR00789">
    <property type="entry name" value="OSIALOPTASE"/>
</dbReference>
<dbReference type="SUPFAM" id="SSF53067">
    <property type="entry name" value="Actin-like ATPase domain"/>
    <property type="match status" value="2"/>
</dbReference>
<dbReference type="PROSITE" id="PS01016">
    <property type="entry name" value="GLYCOPROTEASE"/>
    <property type="match status" value="1"/>
</dbReference>
<reference key="1">
    <citation type="journal article" date="2012" name="Stand. Genomic Sci.">
        <title>Complete genome sequence of Polynucleobacter necessarius subsp. asymbioticus type strain (QLW-P1DMWA-1(T)).</title>
        <authorList>
            <person name="Meincke L."/>
            <person name="Copeland A."/>
            <person name="Lapidus A."/>
            <person name="Lucas S."/>
            <person name="Berry K.W."/>
            <person name="Del Rio T.G."/>
            <person name="Hammon N."/>
            <person name="Dalin E."/>
            <person name="Tice H."/>
            <person name="Pitluck S."/>
            <person name="Richardson P."/>
            <person name="Bruce D."/>
            <person name="Goodwin L."/>
            <person name="Han C."/>
            <person name="Tapia R."/>
            <person name="Detter J.C."/>
            <person name="Schmutz J."/>
            <person name="Brettin T."/>
            <person name="Larimer F."/>
            <person name="Land M."/>
            <person name="Hauser L."/>
            <person name="Kyrpides N.C."/>
            <person name="Ivanova N."/>
            <person name="Goker M."/>
            <person name="Woyke T."/>
            <person name="Wu Q.L."/>
            <person name="Pockl M."/>
            <person name="Hahn M.W."/>
            <person name="Klenk H.P."/>
        </authorList>
    </citation>
    <scope>NUCLEOTIDE SEQUENCE [LARGE SCALE GENOMIC DNA]</scope>
    <source>
        <strain>DSM 18221 / CIP 109841 / QLW-P1DMWA-1</strain>
    </source>
</reference>
<evidence type="ECO:0000255" key="1">
    <source>
        <dbReference type="HAMAP-Rule" id="MF_01445"/>
    </source>
</evidence>
<keyword id="KW-0012">Acyltransferase</keyword>
<keyword id="KW-0963">Cytoplasm</keyword>
<keyword id="KW-0408">Iron</keyword>
<keyword id="KW-0479">Metal-binding</keyword>
<keyword id="KW-1185">Reference proteome</keyword>
<keyword id="KW-0808">Transferase</keyword>
<keyword id="KW-0819">tRNA processing</keyword>
<accession>A4SZK1</accession>
<gene>
    <name evidence="1" type="primary">tsaD</name>
    <name type="synonym">gcp</name>
    <name type="ordered locus">Pnuc_1702</name>
</gene>
<comment type="function">
    <text evidence="1">Required for the formation of a threonylcarbamoyl group on adenosine at position 37 (t(6)A37) in tRNAs that read codons beginning with adenine. Is involved in the transfer of the threonylcarbamoyl moiety of threonylcarbamoyl-AMP (TC-AMP) to the N6 group of A37, together with TsaE and TsaB. TsaD likely plays a direct catalytic role in this reaction.</text>
</comment>
<comment type="catalytic activity">
    <reaction evidence="1">
        <text>L-threonylcarbamoyladenylate + adenosine(37) in tRNA = N(6)-L-threonylcarbamoyladenosine(37) in tRNA + AMP + H(+)</text>
        <dbReference type="Rhea" id="RHEA:37059"/>
        <dbReference type="Rhea" id="RHEA-COMP:10162"/>
        <dbReference type="Rhea" id="RHEA-COMP:10163"/>
        <dbReference type="ChEBI" id="CHEBI:15378"/>
        <dbReference type="ChEBI" id="CHEBI:73682"/>
        <dbReference type="ChEBI" id="CHEBI:74411"/>
        <dbReference type="ChEBI" id="CHEBI:74418"/>
        <dbReference type="ChEBI" id="CHEBI:456215"/>
        <dbReference type="EC" id="2.3.1.234"/>
    </reaction>
</comment>
<comment type="cofactor">
    <cofactor evidence="1">
        <name>Fe(2+)</name>
        <dbReference type="ChEBI" id="CHEBI:29033"/>
    </cofactor>
    <text evidence="1">Binds 1 Fe(2+) ion per subunit.</text>
</comment>
<comment type="subcellular location">
    <subcellularLocation>
        <location evidence="1">Cytoplasm</location>
    </subcellularLocation>
</comment>
<comment type="similarity">
    <text evidence="1">Belongs to the KAE1 / TsaD family.</text>
</comment>
<sequence length="357" mass="37779">MIVLGIETSCDETGVALYNTIPWEEGKPAFQGILGQGLHSQIAMHRDYGGVVPELASRDHIRRVLPLLDESLAQSGLKLSDIDAVAFTQGPGLAGALLVGSAFAKSLAQGLNLPSIGVHHLEGHLLSPLLGQTAPQFPFIALLVSGGHTQLMKVSGIGQYKLLGETLDDAAGEAFDKTAKLLGLDYPGGAAISKLAEKGRPGIFDLPKPMLHSGDLDFSFSGLKTAVLNQTKKFTEKNIVGADEIAQFHADLARSFVDSIVAVLVSKSEKALKQTGCKHLVLAGGVGANLQLRAALNEKASRNGFEVHYPPLELCTDNGVMIAFAGALRMLAENNGSNTSGAFDIKPRWDLQSNNLK</sequence>
<proteinExistence type="inferred from homology"/>
<name>TSAD_POLAQ</name>
<organism>
    <name type="scientific">Polynucleobacter asymbioticus (strain DSM 18221 / CIP 109841 / QLW-P1DMWA-1)</name>
    <name type="common">Polynucleobacter necessarius subsp. asymbioticus</name>
    <dbReference type="NCBI Taxonomy" id="312153"/>
    <lineage>
        <taxon>Bacteria</taxon>
        <taxon>Pseudomonadati</taxon>
        <taxon>Pseudomonadota</taxon>
        <taxon>Betaproteobacteria</taxon>
        <taxon>Burkholderiales</taxon>
        <taxon>Burkholderiaceae</taxon>
        <taxon>Polynucleobacter</taxon>
    </lineage>
</organism>
<protein>
    <recommendedName>
        <fullName evidence="1">tRNA N6-adenosine threonylcarbamoyltransferase</fullName>
        <ecNumber evidence="1">2.3.1.234</ecNumber>
    </recommendedName>
    <alternativeName>
        <fullName evidence="1">N6-L-threonylcarbamoyladenine synthase</fullName>
        <shortName evidence="1">t(6)A synthase</shortName>
    </alternativeName>
    <alternativeName>
        <fullName evidence="1">t(6)A37 threonylcarbamoyladenosine biosynthesis protein TsaD</fullName>
    </alternativeName>
    <alternativeName>
        <fullName evidence="1">tRNA threonylcarbamoyladenosine biosynthesis protein TsaD</fullName>
    </alternativeName>
</protein>
<feature type="chain" id="PRO_1000087482" description="tRNA N6-adenosine threonylcarbamoyltransferase">
    <location>
        <begin position="1"/>
        <end position="357"/>
    </location>
</feature>
<feature type="binding site" evidence="1">
    <location>
        <position position="120"/>
    </location>
    <ligand>
        <name>Fe cation</name>
        <dbReference type="ChEBI" id="CHEBI:24875"/>
    </ligand>
</feature>
<feature type="binding site" evidence="1">
    <location>
        <position position="124"/>
    </location>
    <ligand>
        <name>Fe cation</name>
        <dbReference type="ChEBI" id="CHEBI:24875"/>
    </ligand>
</feature>
<feature type="binding site" evidence="1">
    <location>
        <begin position="143"/>
        <end position="147"/>
    </location>
    <ligand>
        <name>substrate</name>
    </ligand>
</feature>
<feature type="binding site" evidence="1">
    <location>
        <position position="176"/>
    </location>
    <ligand>
        <name>substrate</name>
    </ligand>
</feature>
<feature type="binding site" evidence="1">
    <location>
        <position position="189"/>
    </location>
    <ligand>
        <name>substrate</name>
    </ligand>
</feature>
<feature type="binding site" evidence="1">
    <location>
        <position position="289"/>
    </location>
    <ligand>
        <name>substrate</name>
    </ligand>
</feature>
<feature type="binding site" evidence="1">
    <location>
        <position position="317"/>
    </location>
    <ligand>
        <name>Fe cation</name>
        <dbReference type="ChEBI" id="CHEBI:24875"/>
    </ligand>
</feature>